<dbReference type="EMBL" id="AE014134">
    <property type="protein sequence ID" value="AAF52588.2"/>
    <property type="molecule type" value="Genomic_DNA"/>
</dbReference>
<dbReference type="EMBL" id="BT031146">
    <property type="protein sequence ID" value="ABX00768.1"/>
    <property type="molecule type" value="mRNA"/>
</dbReference>
<dbReference type="RefSeq" id="NP_609172.1">
    <property type="nucleotide sequence ID" value="NM_135328.3"/>
</dbReference>
<dbReference type="SMR" id="Q9VLU4"/>
<dbReference type="FunCoup" id="Q9VLU4">
    <property type="interactions" value="64"/>
</dbReference>
<dbReference type="IntAct" id="Q9VLU4">
    <property type="interactions" value="1"/>
</dbReference>
<dbReference type="STRING" id="7227.FBpp0079171"/>
<dbReference type="MEROPS" id="I04.084"/>
<dbReference type="GlyCosmos" id="Q9VLU4">
    <property type="glycosylation" value="1 site, No reported glycans"/>
</dbReference>
<dbReference type="GlyGen" id="Q9VLU4">
    <property type="glycosylation" value="1 site"/>
</dbReference>
<dbReference type="PaxDb" id="7227-FBpp0079171"/>
<dbReference type="DNASU" id="34091"/>
<dbReference type="EnsemblMetazoa" id="FBtr0079549">
    <property type="protein sequence ID" value="FBpp0079171"/>
    <property type="gene ID" value="FBgn0031973"/>
</dbReference>
<dbReference type="GeneID" id="34091"/>
<dbReference type="KEGG" id="dme:Dmel_CG7219"/>
<dbReference type="UCSC" id="CG7219-RA">
    <property type="organism name" value="d. melanogaster"/>
</dbReference>
<dbReference type="AGR" id="FB:FBgn0031973"/>
<dbReference type="CTD" id="34091"/>
<dbReference type="FlyBase" id="FBgn0031973">
    <property type="gene designation" value="Spn28Dc"/>
</dbReference>
<dbReference type="VEuPathDB" id="VectorBase:FBgn0031973"/>
<dbReference type="eggNOG" id="KOG2392">
    <property type="taxonomic scope" value="Eukaryota"/>
</dbReference>
<dbReference type="HOGENOM" id="CLU_023330_7_1_1"/>
<dbReference type="InParanoid" id="Q9VLU4"/>
<dbReference type="OMA" id="TMYVIQP"/>
<dbReference type="OrthoDB" id="9518664at2759"/>
<dbReference type="PhylomeDB" id="Q9VLU4"/>
<dbReference type="Reactome" id="R-DME-114608">
    <property type="pathway name" value="Platelet degranulation"/>
</dbReference>
<dbReference type="Reactome" id="R-DME-1650814">
    <property type="pathway name" value="Collagen biosynthesis and modifying enzymes"/>
</dbReference>
<dbReference type="Reactome" id="R-DME-3000178">
    <property type="pathway name" value="ECM proteoglycans"/>
</dbReference>
<dbReference type="Reactome" id="R-DME-381426">
    <property type="pathway name" value="Regulation of Insulin-like Growth Factor (IGF) transport and uptake by Insulin-like Growth Factor Binding Proteins (IGFBPs)"/>
</dbReference>
<dbReference type="Reactome" id="R-DME-6798695">
    <property type="pathway name" value="Neutrophil degranulation"/>
</dbReference>
<dbReference type="Reactome" id="R-DME-8957275">
    <property type="pathway name" value="Post-translational protein phosphorylation"/>
</dbReference>
<dbReference type="BioGRID-ORCS" id="34091">
    <property type="hits" value="0 hits in 1 CRISPR screen"/>
</dbReference>
<dbReference type="GenomeRNAi" id="34091"/>
<dbReference type="PRO" id="PR:Q9VLU4"/>
<dbReference type="Proteomes" id="UP000000803">
    <property type="component" value="Chromosome 2L"/>
</dbReference>
<dbReference type="Bgee" id="FBgn0031973">
    <property type="expression patterns" value="Expressed in adult abdominal pericardial cell (Drosophila) in dorsal vessel heart and 74 other cell types or tissues"/>
</dbReference>
<dbReference type="ExpressionAtlas" id="Q9VLU4">
    <property type="expression patterns" value="baseline and differential"/>
</dbReference>
<dbReference type="GO" id="GO:0005615">
    <property type="term" value="C:extracellular space"/>
    <property type="evidence" value="ECO:0000315"/>
    <property type="project" value="FlyBase"/>
</dbReference>
<dbReference type="GO" id="GO:0004867">
    <property type="term" value="F:serine-type endopeptidase inhibitor activity"/>
    <property type="evidence" value="ECO:0007669"/>
    <property type="project" value="UniProtKB-KW"/>
</dbReference>
<dbReference type="GO" id="GO:0002376">
    <property type="term" value="P:immune system process"/>
    <property type="evidence" value="ECO:0007669"/>
    <property type="project" value="UniProtKB-KW"/>
</dbReference>
<dbReference type="GO" id="GO:0042438">
    <property type="term" value="P:melanin biosynthetic process"/>
    <property type="evidence" value="ECO:0007669"/>
    <property type="project" value="UniProtKB-KW"/>
</dbReference>
<dbReference type="GO" id="GO:0035009">
    <property type="term" value="P:negative regulation of melanization defense response"/>
    <property type="evidence" value="ECO:0000315"/>
    <property type="project" value="FlyBase"/>
</dbReference>
<dbReference type="GO" id="GO:0045861">
    <property type="term" value="P:negative regulation of proteolysis"/>
    <property type="evidence" value="ECO:0000315"/>
    <property type="project" value="FlyBase"/>
</dbReference>
<dbReference type="GO" id="GO:0009611">
    <property type="term" value="P:response to wounding"/>
    <property type="evidence" value="ECO:0000315"/>
    <property type="project" value="FlyBase"/>
</dbReference>
<dbReference type="CDD" id="cd19597">
    <property type="entry name" value="serpin28D-like_insects"/>
    <property type="match status" value="1"/>
</dbReference>
<dbReference type="Gene3D" id="2.30.39.10">
    <property type="entry name" value="Alpha-1-antitrypsin, domain 1"/>
    <property type="match status" value="1"/>
</dbReference>
<dbReference type="Gene3D" id="3.30.497.10">
    <property type="entry name" value="Antithrombin, subunit I, domain 2"/>
    <property type="match status" value="1"/>
</dbReference>
<dbReference type="InterPro" id="IPR023796">
    <property type="entry name" value="Serpin_dom"/>
</dbReference>
<dbReference type="InterPro" id="IPR000215">
    <property type="entry name" value="Serpin_fam"/>
</dbReference>
<dbReference type="InterPro" id="IPR036186">
    <property type="entry name" value="Serpin_sf"/>
</dbReference>
<dbReference type="InterPro" id="IPR042178">
    <property type="entry name" value="Serpin_sf_1"/>
</dbReference>
<dbReference type="InterPro" id="IPR042185">
    <property type="entry name" value="Serpin_sf_2"/>
</dbReference>
<dbReference type="PANTHER" id="PTHR11461:SF342">
    <property type="entry name" value="SERINE PROTEASE INHIBITOR 28DC"/>
    <property type="match status" value="1"/>
</dbReference>
<dbReference type="PANTHER" id="PTHR11461">
    <property type="entry name" value="SERINE PROTEASE INHIBITOR, SERPIN"/>
    <property type="match status" value="1"/>
</dbReference>
<dbReference type="Pfam" id="PF00079">
    <property type="entry name" value="Serpin"/>
    <property type="match status" value="1"/>
</dbReference>
<dbReference type="SMART" id="SM00093">
    <property type="entry name" value="SERPIN"/>
    <property type="match status" value="1"/>
</dbReference>
<dbReference type="SUPFAM" id="SSF56574">
    <property type="entry name" value="Serpins"/>
    <property type="match status" value="1"/>
</dbReference>
<keyword id="KW-0217">Developmental protein</keyword>
<keyword id="KW-0325">Glycoprotein</keyword>
<keyword id="KW-0391">Immunity</keyword>
<keyword id="KW-0470">Melanin biosynthesis</keyword>
<keyword id="KW-0646">Protease inhibitor</keyword>
<keyword id="KW-1185">Reference proteome</keyword>
<keyword id="KW-0964">Secreted</keyword>
<keyword id="KW-0722">Serine protease inhibitor</keyword>
<keyword id="KW-0732">Signal</keyword>
<name>SP28D_DROME</name>
<protein>
    <recommendedName>
        <fullName evidence="5">Serine protease inhibitor 28Dc</fullName>
        <shortName evidence="9">Serpin 28Dc</shortName>
    </recommendedName>
    <alternativeName>
        <fullName evidence="5">Serpin-28D</fullName>
    </alternativeName>
</protein>
<reference evidence="10" key="1">
    <citation type="journal article" date="2000" name="Science">
        <title>The genome sequence of Drosophila melanogaster.</title>
        <authorList>
            <person name="Adams M.D."/>
            <person name="Celniker S.E."/>
            <person name="Holt R.A."/>
            <person name="Evans C.A."/>
            <person name="Gocayne J.D."/>
            <person name="Amanatides P.G."/>
            <person name="Scherer S.E."/>
            <person name="Li P.W."/>
            <person name="Hoskins R.A."/>
            <person name="Galle R.F."/>
            <person name="George R.A."/>
            <person name="Lewis S.E."/>
            <person name="Richards S."/>
            <person name="Ashburner M."/>
            <person name="Henderson S.N."/>
            <person name="Sutton G.G."/>
            <person name="Wortman J.R."/>
            <person name="Yandell M.D."/>
            <person name="Zhang Q."/>
            <person name="Chen L.X."/>
            <person name="Brandon R.C."/>
            <person name="Rogers Y.-H.C."/>
            <person name="Blazej R.G."/>
            <person name="Champe M."/>
            <person name="Pfeiffer B.D."/>
            <person name="Wan K.H."/>
            <person name="Doyle C."/>
            <person name="Baxter E.G."/>
            <person name="Helt G."/>
            <person name="Nelson C.R."/>
            <person name="Miklos G.L.G."/>
            <person name="Abril J.F."/>
            <person name="Agbayani A."/>
            <person name="An H.-J."/>
            <person name="Andrews-Pfannkoch C."/>
            <person name="Baldwin D."/>
            <person name="Ballew R.M."/>
            <person name="Basu A."/>
            <person name="Baxendale J."/>
            <person name="Bayraktaroglu L."/>
            <person name="Beasley E.M."/>
            <person name="Beeson K.Y."/>
            <person name="Benos P.V."/>
            <person name="Berman B.P."/>
            <person name="Bhandari D."/>
            <person name="Bolshakov S."/>
            <person name="Borkova D."/>
            <person name="Botchan M.R."/>
            <person name="Bouck J."/>
            <person name="Brokstein P."/>
            <person name="Brottier P."/>
            <person name="Burtis K.C."/>
            <person name="Busam D.A."/>
            <person name="Butler H."/>
            <person name="Cadieu E."/>
            <person name="Center A."/>
            <person name="Chandra I."/>
            <person name="Cherry J.M."/>
            <person name="Cawley S."/>
            <person name="Dahlke C."/>
            <person name="Davenport L.B."/>
            <person name="Davies P."/>
            <person name="de Pablos B."/>
            <person name="Delcher A."/>
            <person name="Deng Z."/>
            <person name="Mays A.D."/>
            <person name="Dew I."/>
            <person name="Dietz S.M."/>
            <person name="Dodson K."/>
            <person name="Doup L.E."/>
            <person name="Downes M."/>
            <person name="Dugan-Rocha S."/>
            <person name="Dunkov B.C."/>
            <person name="Dunn P."/>
            <person name="Durbin K.J."/>
            <person name="Evangelista C.C."/>
            <person name="Ferraz C."/>
            <person name="Ferriera S."/>
            <person name="Fleischmann W."/>
            <person name="Fosler C."/>
            <person name="Gabrielian A.E."/>
            <person name="Garg N.S."/>
            <person name="Gelbart W.M."/>
            <person name="Glasser K."/>
            <person name="Glodek A."/>
            <person name="Gong F."/>
            <person name="Gorrell J.H."/>
            <person name="Gu Z."/>
            <person name="Guan P."/>
            <person name="Harris M."/>
            <person name="Harris N.L."/>
            <person name="Harvey D.A."/>
            <person name="Heiman T.J."/>
            <person name="Hernandez J.R."/>
            <person name="Houck J."/>
            <person name="Hostin D."/>
            <person name="Houston K.A."/>
            <person name="Howland T.J."/>
            <person name="Wei M.-H."/>
            <person name="Ibegwam C."/>
            <person name="Jalali M."/>
            <person name="Kalush F."/>
            <person name="Karpen G.H."/>
            <person name="Ke Z."/>
            <person name="Kennison J.A."/>
            <person name="Ketchum K.A."/>
            <person name="Kimmel B.E."/>
            <person name="Kodira C.D."/>
            <person name="Kraft C.L."/>
            <person name="Kravitz S."/>
            <person name="Kulp D."/>
            <person name="Lai Z."/>
            <person name="Lasko P."/>
            <person name="Lei Y."/>
            <person name="Levitsky A.A."/>
            <person name="Li J.H."/>
            <person name="Li Z."/>
            <person name="Liang Y."/>
            <person name="Lin X."/>
            <person name="Liu X."/>
            <person name="Mattei B."/>
            <person name="McIntosh T.C."/>
            <person name="McLeod M.P."/>
            <person name="McPherson D."/>
            <person name="Merkulov G."/>
            <person name="Milshina N.V."/>
            <person name="Mobarry C."/>
            <person name="Morris J."/>
            <person name="Moshrefi A."/>
            <person name="Mount S.M."/>
            <person name="Moy M."/>
            <person name="Murphy B."/>
            <person name="Murphy L."/>
            <person name="Muzny D.M."/>
            <person name="Nelson D.L."/>
            <person name="Nelson D.R."/>
            <person name="Nelson K.A."/>
            <person name="Nixon K."/>
            <person name="Nusskern D.R."/>
            <person name="Pacleb J.M."/>
            <person name="Palazzolo M."/>
            <person name="Pittman G.S."/>
            <person name="Pan S."/>
            <person name="Pollard J."/>
            <person name="Puri V."/>
            <person name="Reese M.G."/>
            <person name="Reinert K."/>
            <person name="Remington K."/>
            <person name="Saunders R.D.C."/>
            <person name="Scheeler F."/>
            <person name="Shen H."/>
            <person name="Shue B.C."/>
            <person name="Siden-Kiamos I."/>
            <person name="Simpson M."/>
            <person name="Skupski M.P."/>
            <person name="Smith T.J."/>
            <person name="Spier E."/>
            <person name="Spradling A.C."/>
            <person name="Stapleton M."/>
            <person name="Strong R."/>
            <person name="Sun E."/>
            <person name="Svirskas R."/>
            <person name="Tector C."/>
            <person name="Turner R."/>
            <person name="Venter E."/>
            <person name="Wang A.H."/>
            <person name="Wang X."/>
            <person name="Wang Z.-Y."/>
            <person name="Wassarman D.A."/>
            <person name="Weinstock G.M."/>
            <person name="Weissenbach J."/>
            <person name="Williams S.M."/>
            <person name="Woodage T."/>
            <person name="Worley K.C."/>
            <person name="Wu D."/>
            <person name="Yang S."/>
            <person name="Yao Q.A."/>
            <person name="Ye J."/>
            <person name="Yeh R.-F."/>
            <person name="Zaveri J.S."/>
            <person name="Zhan M."/>
            <person name="Zhang G."/>
            <person name="Zhao Q."/>
            <person name="Zheng L."/>
            <person name="Zheng X.H."/>
            <person name="Zhong F.N."/>
            <person name="Zhong W."/>
            <person name="Zhou X."/>
            <person name="Zhu S.C."/>
            <person name="Zhu X."/>
            <person name="Smith H.O."/>
            <person name="Gibbs R.A."/>
            <person name="Myers E.W."/>
            <person name="Rubin G.M."/>
            <person name="Venter J.C."/>
        </authorList>
    </citation>
    <scope>NUCLEOTIDE SEQUENCE [LARGE SCALE GENOMIC DNA]</scope>
    <source>
        <strain evidence="10">Berkeley</strain>
    </source>
</reference>
<reference evidence="10" key="2">
    <citation type="journal article" date="2002" name="Genome Biol.">
        <title>Annotation of the Drosophila melanogaster euchromatic genome: a systematic review.</title>
        <authorList>
            <person name="Misra S."/>
            <person name="Crosby M.A."/>
            <person name="Mungall C.J."/>
            <person name="Matthews B.B."/>
            <person name="Campbell K.S."/>
            <person name="Hradecky P."/>
            <person name="Huang Y."/>
            <person name="Kaminker J.S."/>
            <person name="Millburn G.H."/>
            <person name="Prochnik S.E."/>
            <person name="Smith C.D."/>
            <person name="Tupy J.L."/>
            <person name="Whitfield E.J."/>
            <person name="Bayraktaroglu L."/>
            <person name="Berman B.P."/>
            <person name="Bettencourt B.R."/>
            <person name="Celniker S.E."/>
            <person name="de Grey A.D.N.J."/>
            <person name="Drysdale R.A."/>
            <person name="Harris N.L."/>
            <person name="Richter J."/>
            <person name="Russo S."/>
            <person name="Schroeder A.J."/>
            <person name="Shu S.Q."/>
            <person name="Stapleton M."/>
            <person name="Yamada C."/>
            <person name="Ashburner M."/>
            <person name="Gelbart W.M."/>
            <person name="Rubin G.M."/>
            <person name="Lewis S.E."/>
        </authorList>
    </citation>
    <scope>GENOME REANNOTATION</scope>
    <source>
        <strain evidence="10">Berkeley</strain>
    </source>
</reference>
<reference evidence="8" key="3">
    <citation type="submission" date="2007-11" db="EMBL/GenBank/DDBJ databases">
        <authorList>
            <person name="Stapleton M."/>
            <person name="Carlson J."/>
            <person name="Frise E."/>
            <person name="Kapadia B."/>
            <person name="Park S."/>
            <person name="Wan K."/>
            <person name="Yu C."/>
            <person name="Celniker S."/>
        </authorList>
    </citation>
    <scope>NUCLEOTIDE SEQUENCE [LARGE SCALE MRNA]</scope>
    <source>
        <strain evidence="8">Berkeley</strain>
    </source>
</reference>
<reference key="4">
    <citation type="journal article" date="2008" name="Dev. Biol.">
        <title>Drosophila Serpin-28D regulates hemolymph phenoloxidase activity and adult pigmentation.</title>
        <authorList>
            <person name="Scherfer C."/>
            <person name="Tang H."/>
            <person name="Kambris Z."/>
            <person name="Lhocine N."/>
            <person name="Hashimoto C."/>
            <person name="Lemaitre B."/>
        </authorList>
    </citation>
    <scope>FUNCTION</scope>
    <scope>INDUCTION BY INJURY</scope>
    <scope>DISRUPTION PHENOTYPE</scope>
</reference>
<reference key="5">
    <citation type="journal article" date="2012" name="EMBO J.">
        <title>Genetic evidence of a redox-dependent systemic wound response via Hayan protease-phenoloxidase system in Drosophila.</title>
        <authorList>
            <person name="Nam H.J."/>
            <person name="Jang I.H."/>
            <person name="You H."/>
            <person name="Lee K.A."/>
            <person name="Lee W.J."/>
        </authorList>
    </citation>
    <scope>FUNCTION</scope>
</reference>
<sequence length="536" mass="59350">MWRLLLALLLVSSVCCESELFRDDLRTPETMAYINGLMQRRHQMQQEAQQHIQAIPPAVPLQSPGLVNGLGNQNDPALNRISGTSVKPSNLPAAYSNGYVDLATSDRIANSVLNFANILGQHLANGKTQIYSPLSIVHSLALLLLGAKGRSYEELSTVFDIPDTSRLHEQFGLMLQDLQQPTREAISAGRPLTDWRASSAMRSNRRAQRPGAHEVHLANGLFTQTGYTLNPDYRRVIVEVYASDLQIQDFEGSPATARYNINAYVAQHTKNHIENIIASDIPQTTRMILANALYFKAFWETDFIESATRPDNFYPNGEGTEPVMRVQMMATGGAYPYHEDHELGCKIIGLPYRGNLSTMYIIQPFKSSVRELMALQKRLTADKIESMISRMYRRAALVAFPKMHLTESVNLKTVMQRMGLGGIFSAVQNDLSLIATNEATRTNALGGNSLQNLEAQRRAGTGGARSDLVVDDIVHKVDFTVNEQGTEAAASSVTYLKKSGPDVLFRGDTPFMVLVRHDPTKLVLFYGLINEPPAAA</sequence>
<evidence type="ECO:0000255" key="1"/>
<evidence type="ECO:0000255" key="2">
    <source>
        <dbReference type="PROSITE-ProRule" id="PRU00498"/>
    </source>
</evidence>
<evidence type="ECO:0000269" key="3">
    <source>
    </source>
</evidence>
<evidence type="ECO:0000269" key="4">
    <source>
    </source>
</evidence>
<evidence type="ECO:0000303" key="5">
    <source>
    </source>
</evidence>
<evidence type="ECO:0000305" key="6"/>
<evidence type="ECO:0000305" key="7">
    <source>
    </source>
</evidence>
<evidence type="ECO:0000312" key="8">
    <source>
        <dbReference type="EMBL" id="ABX00768.1"/>
    </source>
</evidence>
<evidence type="ECO:0000312" key="9">
    <source>
        <dbReference type="FlyBase" id="FBgn0031973"/>
    </source>
</evidence>
<evidence type="ECO:0000312" key="10">
    <source>
        <dbReference type="Proteomes" id="UP000000803"/>
    </source>
</evidence>
<organism evidence="10">
    <name type="scientific">Drosophila melanogaster</name>
    <name type="common">Fruit fly</name>
    <dbReference type="NCBI Taxonomy" id="7227"/>
    <lineage>
        <taxon>Eukaryota</taxon>
        <taxon>Metazoa</taxon>
        <taxon>Ecdysozoa</taxon>
        <taxon>Arthropoda</taxon>
        <taxon>Hexapoda</taxon>
        <taxon>Insecta</taxon>
        <taxon>Pterygota</taxon>
        <taxon>Neoptera</taxon>
        <taxon>Endopterygota</taxon>
        <taxon>Diptera</taxon>
        <taxon>Brachycera</taxon>
        <taxon>Muscomorpha</taxon>
        <taxon>Ephydroidea</taxon>
        <taxon>Drosophilidae</taxon>
        <taxon>Drosophila</taxon>
        <taxon>Sophophora</taxon>
    </lineage>
</organism>
<comment type="function">
    <text evidence="3 4">Serine protease inhibitor which is required for pupal viability and plays an essential role in regulating the melanization reaction (PubMed:18801354, PubMed:22227521). Inhibits spontaneous melanization and appears to be involved in the melanization immune response to physical wounding in larvae and adults (PubMed:18801354, PubMed:22227521). Acts by negatively regulating the Hayan-phenoloxidase (PPO1) cascade in the hemolymph and possibly the trachea (PubMed:18801354, PubMed:22227521). May function by controlling the initial release of the activated form of PPO1, phenoloxidase (PO) and thus maintains PO availability for processes such as wound response and pigmentation (PubMed:18801354).</text>
</comment>
<comment type="subcellular location">
    <subcellularLocation>
        <location evidence="7">Secreted</location>
    </subcellularLocation>
</comment>
<comment type="induction">
    <text evidence="3">Up-regulated by injury in larvae and adults.</text>
</comment>
<comment type="disruption phenotype">
    <text evidence="3">RNAi-mediated knockdown is often lethal at the pupal stage, with flies displaying small black or brown spots prior to death. A small percentage of adults survive when grown at 23 degrees Celsius to preclude pupal lethality. These adult escapers (then kept at 29 degrees Celsius) do not display melanotic areas until several hours after eclosion. These melanotic regions or spots are predominately in air-exposed parts of the body, such as those close to the cuticle, and the thoracic and abdominal spiracles. In the tracheae melanization occurs only in the trunk closest to the spiracle. The ptilinal suture and the surrounding area between the eyes also display various amounts of melanization. Around half display reduced pigmentation of their abdomen, and this often occurred in adults that had large melanotic areas. After septic injury, flies display impaired melanization at the wound site, and in their hemolymph there is an overall reduction in the protein level of PPO1 and no significant activity of PO.</text>
</comment>
<comment type="similarity">
    <text evidence="6">Belongs to the serpin family.</text>
</comment>
<accession>Q9VLU4</accession>
<proteinExistence type="evidence at transcript level"/>
<feature type="signal peptide" evidence="1">
    <location>
        <begin position="1"/>
        <end position="16"/>
    </location>
</feature>
<feature type="chain" id="PRO_5007718396" description="Serine protease inhibitor 28Dc" evidence="1">
    <location>
        <begin position="17"/>
        <end position="536"/>
    </location>
</feature>
<feature type="site" description="Reactive bond" evidence="7">
    <location>
        <begin position="499"/>
        <end position="500"/>
    </location>
</feature>
<feature type="glycosylation site" description="N-linked (GlcNAc...) asparagine" evidence="2">
    <location>
        <position position="355"/>
    </location>
</feature>
<gene>
    <name evidence="9" type="primary">Spn28Dc</name>
    <name evidence="9" type="synonym">Spn28D</name>
    <name evidence="9" type="ORF">CG7219</name>
</gene>